<sequence length="436" mass="48884">MSTGFFGDIAKVKYEGPDSTNPLAFRHYNKDEVVLGKRMEDHLRFAVAYWHTFTWPGGDPFGGQTFLRPWFNETMEAAKLKADVAFEFFTLLGSPYYCFHDADVRPEGKNFAENTKNLNEIVDYFAQKQADTGVKLLWGTANLFSNRRFMSGAATNPDPDVFAFSAATVKTCMDATHKLGGENYVLWGGREGYETLLNTDLKRELDQMGRFLNLVVEYKHKIGFKGAILIEPKPQEPTKHQYDYDVATVYGFLKKNGLENEVKLNIEQGHAILAGHSFEHELALANALGIFGSIDMNRNDYQSGWDTDQFPNNVPEMSLAYYQVLAGGGFKSGGTNFDSKLRRQSLDPADLLIGHIGGMDCCARGLKAAAKMIEDKALSQPLADRYAGWDSAEGQKLLRGEYSLDQIAQWVEAKDINPQPKSGKQELLENIVNRYV</sequence>
<comment type="catalytic activity">
    <reaction evidence="1">
        <text>alpha-D-xylose = alpha-D-xylulofuranose</text>
        <dbReference type="Rhea" id="RHEA:22816"/>
        <dbReference type="ChEBI" id="CHEBI:28518"/>
        <dbReference type="ChEBI" id="CHEBI:188998"/>
        <dbReference type="EC" id="5.3.1.5"/>
    </reaction>
</comment>
<comment type="cofactor">
    <cofactor evidence="1">
        <name>Mg(2+)</name>
        <dbReference type="ChEBI" id="CHEBI:18420"/>
    </cofactor>
    <text evidence="1">Binds 2 magnesium ions per subunit.</text>
</comment>
<comment type="subunit">
    <text evidence="1">Homotetramer.</text>
</comment>
<comment type="subcellular location">
    <subcellularLocation>
        <location evidence="1">Cytoplasm</location>
    </subcellularLocation>
</comment>
<comment type="similarity">
    <text evidence="1">Belongs to the xylose isomerase family.</text>
</comment>
<feature type="chain" id="PRO_1000200274" description="Xylose isomerase">
    <location>
        <begin position="1"/>
        <end position="436"/>
    </location>
</feature>
<feature type="binding site" evidence="1">
    <location>
        <position position="306"/>
    </location>
    <ligand>
        <name>Mg(2+)</name>
        <dbReference type="ChEBI" id="CHEBI:18420"/>
        <label>2</label>
    </ligand>
</feature>
<feature type="binding site" evidence="1">
    <location>
        <position position="308"/>
    </location>
    <ligand>
        <name>Mg(2+)</name>
        <dbReference type="ChEBI" id="CHEBI:18420"/>
        <label>2</label>
    </ligand>
</feature>
<accession>B9JAF5</accession>
<proteinExistence type="inferred from homology"/>
<organism>
    <name type="scientific">Rhizobium rhizogenes (strain K84 / ATCC BAA-868)</name>
    <name type="common">Agrobacterium radiobacter</name>
    <dbReference type="NCBI Taxonomy" id="311403"/>
    <lineage>
        <taxon>Bacteria</taxon>
        <taxon>Pseudomonadati</taxon>
        <taxon>Pseudomonadota</taxon>
        <taxon>Alphaproteobacteria</taxon>
        <taxon>Hyphomicrobiales</taxon>
        <taxon>Rhizobiaceae</taxon>
        <taxon>Rhizobium/Agrobacterium group</taxon>
        <taxon>Rhizobium</taxon>
    </lineage>
</organism>
<evidence type="ECO:0000255" key="1">
    <source>
        <dbReference type="HAMAP-Rule" id="MF_00455"/>
    </source>
</evidence>
<gene>
    <name evidence="1" type="primary">xylA</name>
    <name type="ordered locus">Arad_3938</name>
</gene>
<name>XYLA_RHIR8</name>
<protein>
    <recommendedName>
        <fullName evidence="1">Xylose isomerase</fullName>
        <ecNumber evidence="1">5.3.1.5</ecNumber>
    </recommendedName>
</protein>
<dbReference type="EC" id="5.3.1.5" evidence="1"/>
<dbReference type="EMBL" id="CP000628">
    <property type="protein sequence ID" value="ACM27770.1"/>
    <property type="molecule type" value="Genomic_DNA"/>
</dbReference>
<dbReference type="RefSeq" id="WP_012652406.1">
    <property type="nucleotide sequence ID" value="NC_011985.1"/>
</dbReference>
<dbReference type="SMR" id="B9JAF5"/>
<dbReference type="STRING" id="311403.Arad_3938"/>
<dbReference type="GeneID" id="86849626"/>
<dbReference type="KEGG" id="ara:Arad_3938"/>
<dbReference type="eggNOG" id="COG2115">
    <property type="taxonomic scope" value="Bacteria"/>
</dbReference>
<dbReference type="HOGENOM" id="CLU_037261_1_0_5"/>
<dbReference type="Proteomes" id="UP000001600">
    <property type="component" value="Chromosome 1"/>
</dbReference>
<dbReference type="GO" id="GO:0005737">
    <property type="term" value="C:cytoplasm"/>
    <property type="evidence" value="ECO:0007669"/>
    <property type="project" value="UniProtKB-SubCell"/>
</dbReference>
<dbReference type="GO" id="GO:0000287">
    <property type="term" value="F:magnesium ion binding"/>
    <property type="evidence" value="ECO:0007669"/>
    <property type="project" value="UniProtKB-UniRule"/>
</dbReference>
<dbReference type="GO" id="GO:0009045">
    <property type="term" value="F:xylose isomerase activity"/>
    <property type="evidence" value="ECO:0007669"/>
    <property type="project" value="UniProtKB-UniRule"/>
</dbReference>
<dbReference type="GO" id="GO:0042732">
    <property type="term" value="P:D-xylose metabolic process"/>
    <property type="evidence" value="ECO:0007669"/>
    <property type="project" value="UniProtKB-UniRule"/>
</dbReference>
<dbReference type="FunFam" id="3.20.20.150:FF:000002">
    <property type="entry name" value="Xylose isomerase"/>
    <property type="match status" value="1"/>
</dbReference>
<dbReference type="Gene3D" id="3.20.20.150">
    <property type="entry name" value="Divalent-metal-dependent TIM barrel enzymes"/>
    <property type="match status" value="1"/>
</dbReference>
<dbReference type="HAMAP" id="MF_00455">
    <property type="entry name" value="Xylose_isom_A"/>
    <property type="match status" value="1"/>
</dbReference>
<dbReference type="InterPro" id="IPR036237">
    <property type="entry name" value="Xyl_isomerase-like_sf"/>
</dbReference>
<dbReference type="InterPro" id="IPR013452">
    <property type="entry name" value="Xylose_isom_bac"/>
</dbReference>
<dbReference type="InterPro" id="IPR001998">
    <property type="entry name" value="Xylose_isomerase"/>
</dbReference>
<dbReference type="NCBIfam" id="NF003998">
    <property type="entry name" value="PRK05474.1"/>
    <property type="match status" value="1"/>
</dbReference>
<dbReference type="NCBIfam" id="TIGR02630">
    <property type="entry name" value="xylose_isom_A"/>
    <property type="match status" value="1"/>
</dbReference>
<dbReference type="PANTHER" id="PTHR48408">
    <property type="match status" value="1"/>
</dbReference>
<dbReference type="PANTHER" id="PTHR48408:SF1">
    <property type="entry name" value="XYLOSE ISOMERASE"/>
    <property type="match status" value="1"/>
</dbReference>
<dbReference type="PRINTS" id="PR00688">
    <property type="entry name" value="XYLOSISMRASE"/>
</dbReference>
<dbReference type="SUPFAM" id="SSF51658">
    <property type="entry name" value="Xylose isomerase-like"/>
    <property type="match status" value="1"/>
</dbReference>
<dbReference type="PROSITE" id="PS51415">
    <property type="entry name" value="XYLOSE_ISOMERASE"/>
    <property type="match status" value="1"/>
</dbReference>
<keyword id="KW-0119">Carbohydrate metabolism</keyword>
<keyword id="KW-0963">Cytoplasm</keyword>
<keyword id="KW-0413">Isomerase</keyword>
<keyword id="KW-0460">Magnesium</keyword>
<keyword id="KW-0479">Metal-binding</keyword>
<keyword id="KW-0859">Xylose metabolism</keyword>
<reference key="1">
    <citation type="journal article" date="2009" name="J. Bacteriol.">
        <title>Genome sequences of three Agrobacterium biovars help elucidate the evolution of multichromosome genomes in bacteria.</title>
        <authorList>
            <person name="Slater S.C."/>
            <person name="Goldman B.S."/>
            <person name="Goodner B."/>
            <person name="Setubal J.C."/>
            <person name="Farrand S.K."/>
            <person name="Nester E.W."/>
            <person name="Burr T.J."/>
            <person name="Banta L."/>
            <person name="Dickerman A.W."/>
            <person name="Paulsen I."/>
            <person name="Otten L."/>
            <person name="Suen G."/>
            <person name="Welch R."/>
            <person name="Almeida N.F."/>
            <person name="Arnold F."/>
            <person name="Burton O.T."/>
            <person name="Du Z."/>
            <person name="Ewing A."/>
            <person name="Godsy E."/>
            <person name="Heisel S."/>
            <person name="Houmiel K.L."/>
            <person name="Jhaveri J."/>
            <person name="Lu J."/>
            <person name="Miller N.M."/>
            <person name="Norton S."/>
            <person name="Chen Q."/>
            <person name="Phoolcharoen W."/>
            <person name="Ohlin V."/>
            <person name="Ondrusek D."/>
            <person name="Pride N."/>
            <person name="Stricklin S.L."/>
            <person name="Sun J."/>
            <person name="Wheeler C."/>
            <person name="Wilson L."/>
            <person name="Zhu H."/>
            <person name="Wood D.W."/>
        </authorList>
    </citation>
    <scope>NUCLEOTIDE SEQUENCE [LARGE SCALE GENOMIC DNA]</scope>
    <source>
        <strain>K84 / ATCC BAA-868</strain>
    </source>
</reference>